<accession>Q6D474</accession>
<protein>
    <recommendedName>
        <fullName evidence="1">Arginine--tRNA ligase</fullName>
        <ecNumber evidence="1">6.1.1.19</ecNumber>
    </recommendedName>
    <alternativeName>
        <fullName evidence="1">Arginyl-tRNA synthetase</fullName>
        <shortName evidence="1">ArgRS</shortName>
    </alternativeName>
</protein>
<gene>
    <name evidence="1" type="primary">argS</name>
    <name type="ordered locus">ECA2520</name>
</gene>
<proteinExistence type="inferred from homology"/>
<reference key="1">
    <citation type="journal article" date="2004" name="Proc. Natl. Acad. Sci. U.S.A.">
        <title>Genome sequence of the enterobacterial phytopathogen Erwinia carotovora subsp. atroseptica and characterization of virulence factors.</title>
        <authorList>
            <person name="Bell K.S."/>
            <person name="Sebaihia M."/>
            <person name="Pritchard L."/>
            <person name="Holden M.T.G."/>
            <person name="Hyman L.J."/>
            <person name="Holeva M.C."/>
            <person name="Thomson N.R."/>
            <person name="Bentley S.D."/>
            <person name="Churcher L.J.C."/>
            <person name="Mungall K."/>
            <person name="Atkin R."/>
            <person name="Bason N."/>
            <person name="Brooks K."/>
            <person name="Chillingworth T."/>
            <person name="Clark K."/>
            <person name="Doggett J."/>
            <person name="Fraser A."/>
            <person name="Hance Z."/>
            <person name="Hauser H."/>
            <person name="Jagels K."/>
            <person name="Moule S."/>
            <person name="Norbertczak H."/>
            <person name="Ormond D."/>
            <person name="Price C."/>
            <person name="Quail M.A."/>
            <person name="Sanders M."/>
            <person name="Walker D."/>
            <person name="Whitehead S."/>
            <person name="Salmond G.P.C."/>
            <person name="Birch P.R.J."/>
            <person name="Parkhill J."/>
            <person name="Toth I.K."/>
        </authorList>
    </citation>
    <scope>NUCLEOTIDE SEQUENCE [LARGE SCALE GENOMIC DNA]</scope>
    <source>
        <strain>SCRI 1043 / ATCC BAA-672</strain>
    </source>
</reference>
<organism>
    <name type="scientific">Pectobacterium atrosepticum (strain SCRI 1043 / ATCC BAA-672)</name>
    <name type="common">Erwinia carotovora subsp. atroseptica</name>
    <dbReference type="NCBI Taxonomy" id="218491"/>
    <lineage>
        <taxon>Bacteria</taxon>
        <taxon>Pseudomonadati</taxon>
        <taxon>Pseudomonadota</taxon>
        <taxon>Gammaproteobacteria</taxon>
        <taxon>Enterobacterales</taxon>
        <taxon>Pectobacteriaceae</taxon>
        <taxon>Pectobacterium</taxon>
    </lineage>
</organism>
<sequence>MNIQALLSEKVSQALTAAGAPADSEAQVRQSAKAQFGDYQANGVMAVAKKLGMPPRQLAEKVVQLLALEGIAEKTEIAGPGFINIFLDKQWVASQVENALNAPKLGLTPVEPQTIVIDYSAPNVAKEMHVGHLRSTIIGDAAARTLEFLGHNIIRANHVGDWGTQFGMLIAYLEKMQNESANEMDLSDLEAFYREAKKHYDEDADFAERARGYVVKLQGGDEYCRQMWRKLVDITMTQNQINYERLNVTLTKQDVMGESLYNSMLPNIVADLKAKGLAVESEGATVVFLDEYKNKEGEPMGVIIQKKDGGYLYTTTDIACAKYRYETLNADRVLYYIDSRQHQHLMQAWTIVRKAGYVPDSVSLEHHMFGMMLGKDGKPFKTRAGGTIKLSELLDEAYGRALKLIAEKNPQMESDELAALAKVVSIGAIKYADLSKSRTTDYVFDWDNMLAFEGNTAPYMQYAYTRVASIFKRAGIQEDTLTQPITLNDEREFALATRLLQFEETITSVAREGTPHVMCSYLYDLAGLFSGFYEHCPILNAENDDVRQSRLRLALLTAKTLKQGLDTLGIETVDKM</sequence>
<evidence type="ECO:0000255" key="1">
    <source>
        <dbReference type="HAMAP-Rule" id="MF_00123"/>
    </source>
</evidence>
<keyword id="KW-0030">Aminoacyl-tRNA synthetase</keyword>
<keyword id="KW-0067">ATP-binding</keyword>
<keyword id="KW-0963">Cytoplasm</keyword>
<keyword id="KW-0436">Ligase</keyword>
<keyword id="KW-0547">Nucleotide-binding</keyword>
<keyword id="KW-0648">Protein biosynthesis</keyword>
<keyword id="KW-1185">Reference proteome</keyword>
<comment type="catalytic activity">
    <reaction evidence="1">
        <text>tRNA(Arg) + L-arginine + ATP = L-arginyl-tRNA(Arg) + AMP + diphosphate</text>
        <dbReference type="Rhea" id="RHEA:20301"/>
        <dbReference type="Rhea" id="RHEA-COMP:9658"/>
        <dbReference type="Rhea" id="RHEA-COMP:9673"/>
        <dbReference type="ChEBI" id="CHEBI:30616"/>
        <dbReference type="ChEBI" id="CHEBI:32682"/>
        <dbReference type="ChEBI" id="CHEBI:33019"/>
        <dbReference type="ChEBI" id="CHEBI:78442"/>
        <dbReference type="ChEBI" id="CHEBI:78513"/>
        <dbReference type="ChEBI" id="CHEBI:456215"/>
        <dbReference type="EC" id="6.1.1.19"/>
    </reaction>
</comment>
<comment type="subunit">
    <text evidence="1">Monomer.</text>
</comment>
<comment type="subcellular location">
    <subcellularLocation>
        <location evidence="1">Cytoplasm</location>
    </subcellularLocation>
</comment>
<comment type="similarity">
    <text evidence="1">Belongs to the class-I aminoacyl-tRNA synthetase family.</text>
</comment>
<dbReference type="EC" id="6.1.1.19" evidence="1"/>
<dbReference type="EMBL" id="BX950851">
    <property type="protein sequence ID" value="CAG75419.1"/>
    <property type="molecule type" value="Genomic_DNA"/>
</dbReference>
<dbReference type="RefSeq" id="WP_011094065.1">
    <property type="nucleotide sequence ID" value="NC_004547.2"/>
</dbReference>
<dbReference type="SMR" id="Q6D474"/>
<dbReference type="STRING" id="218491.ECA2520"/>
<dbReference type="GeneID" id="57208784"/>
<dbReference type="KEGG" id="eca:ECA2520"/>
<dbReference type="PATRIC" id="fig|218491.5.peg.2550"/>
<dbReference type="eggNOG" id="COG0018">
    <property type="taxonomic scope" value="Bacteria"/>
</dbReference>
<dbReference type="HOGENOM" id="CLU_006406_5_1_6"/>
<dbReference type="OrthoDB" id="9803211at2"/>
<dbReference type="Proteomes" id="UP000007966">
    <property type="component" value="Chromosome"/>
</dbReference>
<dbReference type="GO" id="GO:0005737">
    <property type="term" value="C:cytoplasm"/>
    <property type="evidence" value="ECO:0007669"/>
    <property type="project" value="UniProtKB-SubCell"/>
</dbReference>
<dbReference type="GO" id="GO:0004814">
    <property type="term" value="F:arginine-tRNA ligase activity"/>
    <property type="evidence" value="ECO:0007669"/>
    <property type="project" value="UniProtKB-UniRule"/>
</dbReference>
<dbReference type="GO" id="GO:0005524">
    <property type="term" value="F:ATP binding"/>
    <property type="evidence" value="ECO:0007669"/>
    <property type="project" value="UniProtKB-UniRule"/>
</dbReference>
<dbReference type="GO" id="GO:0006420">
    <property type="term" value="P:arginyl-tRNA aminoacylation"/>
    <property type="evidence" value="ECO:0007669"/>
    <property type="project" value="UniProtKB-UniRule"/>
</dbReference>
<dbReference type="CDD" id="cd07956">
    <property type="entry name" value="Anticodon_Ia_Arg"/>
    <property type="match status" value="1"/>
</dbReference>
<dbReference type="CDD" id="cd00671">
    <property type="entry name" value="ArgRS_core"/>
    <property type="match status" value="1"/>
</dbReference>
<dbReference type="FunFam" id="1.10.730.10:FF:000001">
    <property type="entry name" value="Arginine--tRNA ligase"/>
    <property type="match status" value="1"/>
</dbReference>
<dbReference type="FunFam" id="3.30.1360.70:FF:000001">
    <property type="entry name" value="Arginine--tRNA ligase"/>
    <property type="match status" value="1"/>
</dbReference>
<dbReference type="FunFam" id="3.40.50.620:FF:000030">
    <property type="entry name" value="Arginine--tRNA ligase"/>
    <property type="match status" value="1"/>
</dbReference>
<dbReference type="Gene3D" id="3.30.1360.70">
    <property type="entry name" value="Arginyl tRNA synthetase N-terminal domain"/>
    <property type="match status" value="1"/>
</dbReference>
<dbReference type="Gene3D" id="3.40.50.620">
    <property type="entry name" value="HUPs"/>
    <property type="match status" value="1"/>
</dbReference>
<dbReference type="Gene3D" id="1.10.730.10">
    <property type="entry name" value="Isoleucyl-tRNA Synthetase, Domain 1"/>
    <property type="match status" value="1"/>
</dbReference>
<dbReference type="HAMAP" id="MF_00123">
    <property type="entry name" value="Arg_tRNA_synth"/>
    <property type="match status" value="1"/>
</dbReference>
<dbReference type="InterPro" id="IPR001412">
    <property type="entry name" value="aa-tRNA-synth_I_CS"/>
</dbReference>
<dbReference type="InterPro" id="IPR001278">
    <property type="entry name" value="Arg-tRNA-ligase"/>
</dbReference>
<dbReference type="InterPro" id="IPR005148">
    <property type="entry name" value="Arg-tRNA-synth_N"/>
</dbReference>
<dbReference type="InterPro" id="IPR036695">
    <property type="entry name" value="Arg-tRNA-synth_N_sf"/>
</dbReference>
<dbReference type="InterPro" id="IPR035684">
    <property type="entry name" value="ArgRS_core"/>
</dbReference>
<dbReference type="InterPro" id="IPR008909">
    <property type="entry name" value="DALR_anticod-bd"/>
</dbReference>
<dbReference type="InterPro" id="IPR014729">
    <property type="entry name" value="Rossmann-like_a/b/a_fold"/>
</dbReference>
<dbReference type="InterPro" id="IPR009080">
    <property type="entry name" value="tRNAsynth_Ia_anticodon-bd"/>
</dbReference>
<dbReference type="NCBIfam" id="TIGR00456">
    <property type="entry name" value="argS"/>
    <property type="match status" value="1"/>
</dbReference>
<dbReference type="PANTHER" id="PTHR11956:SF5">
    <property type="entry name" value="ARGININE--TRNA LIGASE, CYTOPLASMIC"/>
    <property type="match status" value="1"/>
</dbReference>
<dbReference type="PANTHER" id="PTHR11956">
    <property type="entry name" value="ARGINYL-TRNA SYNTHETASE"/>
    <property type="match status" value="1"/>
</dbReference>
<dbReference type="Pfam" id="PF03485">
    <property type="entry name" value="Arg_tRNA_synt_N"/>
    <property type="match status" value="1"/>
</dbReference>
<dbReference type="Pfam" id="PF05746">
    <property type="entry name" value="DALR_1"/>
    <property type="match status" value="1"/>
</dbReference>
<dbReference type="Pfam" id="PF00750">
    <property type="entry name" value="tRNA-synt_1d"/>
    <property type="match status" value="1"/>
</dbReference>
<dbReference type="PRINTS" id="PR01038">
    <property type="entry name" value="TRNASYNTHARG"/>
</dbReference>
<dbReference type="SMART" id="SM01016">
    <property type="entry name" value="Arg_tRNA_synt_N"/>
    <property type="match status" value="1"/>
</dbReference>
<dbReference type="SMART" id="SM00836">
    <property type="entry name" value="DALR_1"/>
    <property type="match status" value="1"/>
</dbReference>
<dbReference type="SUPFAM" id="SSF47323">
    <property type="entry name" value="Anticodon-binding domain of a subclass of class I aminoacyl-tRNA synthetases"/>
    <property type="match status" value="1"/>
</dbReference>
<dbReference type="SUPFAM" id="SSF55190">
    <property type="entry name" value="Arginyl-tRNA synthetase (ArgRS), N-terminal 'additional' domain"/>
    <property type="match status" value="1"/>
</dbReference>
<dbReference type="SUPFAM" id="SSF52374">
    <property type="entry name" value="Nucleotidylyl transferase"/>
    <property type="match status" value="1"/>
</dbReference>
<dbReference type="PROSITE" id="PS00178">
    <property type="entry name" value="AA_TRNA_LIGASE_I"/>
    <property type="match status" value="1"/>
</dbReference>
<name>SYR_PECAS</name>
<feature type="chain" id="PRO_0000242021" description="Arginine--tRNA ligase">
    <location>
        <begin position="1"/>
        <end position="576"/>
    </location>
</feature>
<feature type="short sequence motif" description="'HIGH' region">
    <location>
        <begin position="122"/>
        <end position="132"/>
    </location>
</feature>